<proteinExistence type="inferred from homology"/>
<reference key="1">
    <citation type="journal article" date="2007" name="J. Bacteriol.">
        <title>Genome of the opportunistic pathogen Streptococcus sanguinis.</title>
        <authorList>
            <person name="Xu P."/>
            <person name="Alves J.M."/>
            <person name="Kitten T."/>
            <person name="Brown A."/>
            <person name="Chen Z."/>
            <person name="Ozaki L.S."/>
            <person name="Manque P."/>
            <person name="Ge X."/>
            <person name="Serrano M.G."/>
            <person name="Puiu D."/>
            <person name="Hendricks S."/>
            <person name="Wang Y."/>
            <person name="Chaplin M.D."/>
            <person name="Akan D."/>
            <person name="Paik S."/>
            <person name="Peterson D.L."/>
            <person name="Macrina F.L."/>
            <person name="Buck G.A."/>
        </authorList>
    </citation>
    <scope>NUCLEOTIDE SEQUENCE [LARGE SCALE GENOMIC DNA]</scope>
    <source>
        <strain>SK36</strain>
    </source>
</reference>
<evidence type="ECO:0000255" key="1">
    <source>
        <dbReference type="HAMAP-Rule" id="MF_00600"/>
    </source>
</evidence>
<protein>
    <recommendedName>
        <fullName evidence="1">Chaperonin GroEL</fullName>
        <ecNumber evidence="1">5.6.1.7</ecNumber>
    </recommendedName>
    <alternativeName>
        <fullName evidence="1">60 kDa chaperonin</fullName>
    </alternativeName>
    <alternativeName>
        <fullName evidence="1">Chaperonin-60</fullName>
        <shortName evidence="1">Cpn60</shortName>
    </alternativeName>
</protein>
<organism>
    <name type="scientific">Streptococcus sanguinis (strain SK36)</name>
    <dbReference type="NCBI Taxonomy" id="388919"/>
    <lineage>
        <taxon>Bacteria</taxon>
        <taxon>Bacillati</taxon>
        <taxon>Bacillota</taxon>
        <taxon>Bacilli</taxon>
        <taxon>Lactobacillales</taxon>
        <taxon>Streptococcaceae</taxon>
        <taxon>Streptococcus</taxon>
    </lineage>
</organism>
<name>CH60_STRSV</name>
<sequence length="540" mass="56909">MAKDIKFSADARSSMVRGVDILANTVKVTLGPKGRNVVLEKSFGSPLITNDGVTIAKEIELEDHFENMGAKLVSEVASKTNDIAGDGTTTATVLTQAIVREGIKNVTAGANPIGIRRGIEAAVATAVEALKSNSVPVSNKEAIAQVAAVSSRSEKVGEYISEAMEKVGNDGVITIEESKGMETELDVVEGMQFDRGYLSQYMVTDNEKMVAELDNPYILITDKKISNIQEILPLLENILKTNRPLLIVADDVDGEALPTLVLNKIRGTFNVVAVKAPGFGDRRKAMLEDIAILTGGTVITDDLGLELKDATIEALGQASKVTVDKDSTVIVEGSGNPEAIANRVAVIKSQIESSTSEFDREKLQERLAKLSGGVAVIKVGAATETELKEMKLRIEDALNATRAAVEEGIVSGGGTAYINVLDAVAGLELAGDEGTGRNIVLRALEEPVRQIALNAGFEGSIVIDRLKNSEVGTGFNAATGEWVNMIEAGIIDPVKVTRSALQNAASVASLILTTEAVVANQPEPASPAPAMDPGMMGGMM</sequence>
<dbReference type="EC" id="5.6.1.7" evidence="1"/>
<dbReference type="EMBL" id="CP000387">
    <property type="protein sequence ID" value="ABN43686.1"/>
    <property type="molecule type" value="Genomic_DNA"/>
</dbReference>
<dbReference type="RefSeq" id="WP_002914472.1">
    <property type="nucleotide sequence ID" value="NC_009009.1"/>
</dbReference>
<dbReference type="RefSeq" id="YP_001034236.1">
    <property type="nucleotide sequence ID" value="NC_009009.1"/>
</dbReference>
<dbReference type="SMR" id="A3CKI1"/>
<dbReference type="STRING" id="388919.SSA_0226"/>
<dbReference type="GeneID" id="48426478"/>
<dbReference type="KEGG" id="ssa:SSA_0226"/>
<dbReference type="PATRIC" id="fig|388919.9.peg.221"/>
<dbReference type="eggNOG" id="COG0459">
    <property type="taxonomic scope" value="Bacteria"/>
</dbReference>
<dbReference type="HOGENOM" id="CLU_016503_3_0_9"/>
<dbReference type="OrthoDB" id="9766614at2"/>
<dbReference type="Proteomes" id="UP000002148">
    <property type="component" value="Chromosome"/>
</dbReference>
<dbReference type="GO" id="GO:0005737">
    <property type="term" value="C:cytoplasm"/>
    <property type="evidence" value="ECO:0007669"/>
    <property type="project" value="UniProtKB-SubCell"/>
</dbReference>
<dbReference type="GO" id="GO:0005524">
    <property type="term" value="F:ATP binding"/>
    <property type="evidence" value="ECO:0007669"/>
    <property type="project" value="UniProtKB-UniRule"/>
</dbReference>
<dbReference type="GO" id="GO:0140662">
    <property type="term" value="F:ATP-dependent protein folding chaperone"/>
    <property type="evidence" value="ECO:0007669"/>
    <property type="project" value="InterPro"/>
</dbReference>
<dbReference type="GO" id="GO:0016853">
    <property type="term" value="F:isomerase activity"/>
    <property type="evidence" value="ECO:0007669"/>
    <property type="project" value="UniProtKB-KW"/>
</dbReference>
<dbReference type="GO" id="GO:0051082">
    <property type="term" value="F:unfolded protein binding"/>
    <property type="evidence" value="ECO:0007669"/>
    <property type="project" value="UniProtKB-UniRule"/>
</dbReference>
<dbReference type="GO" id="GO:0042026">
    <property type="term" value="P:protein refolding"/>
    <property type="evidence" value="ECO:0007669"/>
    <property type="project" value="UniProtKB-UniRule"/>
</dbReference>
<dbReference type="CDD" id="cd03344">
    <property type="entry name" value="GroEL"/>
    <property type="match status" value="1"/>
</dbReference>
<dbReference type="FunFam" id="1.10.560.10:FF:000001">
    <property type="entry name" value="60 kDa chaperonin"/>
    <property type="match status" value="1"/>
</dbReference>
<dbReference type="FunFam" id="3.50.7.10:FF:000001">
    <property type="entry name" value="60 kDa chaperonin"/>
    <property type="match status" value="1"/>
</dbReference>
<dbReference type="Gene3D" id="3.50.7.10">
    <property type="entry name" value="GroEL"/>
    <property type="match status" value="1"/>
</dbReference>
<dbReference type="Gene3D" id="1.10.560.10">
    <property type="entry name" value="GroEL-like equatorial domain"/>
    <property type="match status" value="1"/>
</dbReference>
<dbReference type="Gene3D" id="3.30.260.10">
    <property type="entry name" value="TCP-1-like chaperonin intermediate domain"/>
    <property type="match status" value="1"/>
</dbReference>
<dbReference type="HAMAP" id="MF_00600">
    <property type="entry name" value="CH60"/>
    <property type="match status" value="1"/>
</dbReference>
<dbReference type="InterPro" id="IPR018370">
    <property type="entry name" value="Chaperonin_Cpn60_CS"/>
</dbReference>
<dbReference type="InterPro" id="IPR001844">
    <property type="entry name" value="Cpn60/GroEL"/>
</dbReference>
<dbReference type="InterPro" id="IPR002423">
    <property type="entry name" value="Cpn60/GroEL/TCP-1"/>
</dbReference>
<dbReference type="InterPro" id="IPR027409">
    <property type="entry name" value="GroEL-like_apical_dom_sf"/>
</dbReference>
<dbReference type="InterPro" id="IPR027413">
    <property type="entry name" value="GROEL-like_equatorial_sf"/>
</dbReference>
<dbReference type="InterPro" id="IPR027410">
    <property type="entry name" value="TCP-1-like_intermed_sf"/>
</dbReference>
<dbReference type="NCBIfam" id="TIGR02348">
    <property type="entry name" value="GroEL"/>
    <property type="match status" value="1"/>
</dbReference>
<dbReference type="NCBIfam" id="NF000592">
    <property type="entry name" value="PRK00013.1"/>
    <property type="match status" value="1"/>
</dbReference>
<dbReference type="NCBIfam" id="NF009487">
    <property type="entry name" value="PRK12849.1"/>
    <property type="match status" value="1"/>
</dbReference>
<dbReference type="NCBIfam" id="NF009488">
    <property type="entry name" value="PRK12850.1"/>
    <property type="match status" value="1"/>
</dbReference>
<dbReference type="NCBIfam" id="NF009489">
    <property type="entry name" value="PRK12851.1"/>
    <property type="match status" value="1"/>
</dbReference>
<dbReference type="PANTHER" id="PTHR45633">
    <property type="entry name" value="60 KDA HEAT SHOCK PROTEIN, MITOCHONDRIAL"/>
    <property type="match status" value="1"/>
</dbReference>
<dbReference type="Pfam" id="PF00118">
    <property type="entry name" value="Cpn60_TCP1"/>
    <property type="match status" value="1"/>
</dbReference>
<dbReference type="PRINTS" id="PR00298">
    <property type="entry name" value="CHAPERONIN60"/>
</dbReference>
<dbReference type="SUPFAM" id="SSF52029">
    <property type="entry name" value="GroEL apical domain-like"/>
    <property type="match status" value="1"/>
</dbReference>
<dbReference type="SUPFAM" id="SSF48592">
    <property type="entry name" value="GroEL equatorial domain-like"/>
    <property type="match status" value="1"/>
</dbReference>
<dbReference type="SUPFAM" id="SSF54849">
    <property type="entry name" value="GroEL-intermediate domain like"/>
    <property type="match status" value="1"/>
</dbReference>
<dbReference type="PROSITE" id="PS00296">
    <property type="entry name" value="CHAPERONINS_CPN60"/>
    <property type="match status" value="1"/>
</dbReference>
<accession>A3CKI1</accession>
<feature type="chain" id="PRO_1000025840" description="Chaperonin GroEL">
    <location>
        <begin position="1"/>
        <end position="540"/>
    </location>
</feature>
<feature type="binding site" evidence="1">
    <location>
        <begin position="29"/>
        <end position="32"/>
    </location>
    <ligand>
        <name>ATP</name>
        <dbReference type="ChEBI" id="CHEBI:30616"/>
    </ligand>
</feature>
<feature type="binding site" evidence="1">
    <location>
        <begin position="86"/>
        <end position="90"/>
    </location>
    <ligand>
        <name>ATP</name>
        <dbReference type="ChEBI" id="CHEBI:30616"/>
    </ligand>
</feature>
<feature type="binding site" evidence="1">
    <location>
        <position position="413"/>
    </location>
    <ligand>
        <name>ATP</name>
        <dbReference type="ChEBI" id="CHEBI:30616"/>
    </ligand>
</feature>
<feature type="binding site" evidence="1">
    <location>
        <begin position="476"/>
        <end position="478"/>
    </location>
    <ligand>
        <name>ATP</name>
        <dbReference type="ChEBI" id="CHEBI:30616"/>
    </ligand>
</feature>
<feature type="binding site" evidence="1">
    <location>
        <position position="492"/>
    </location>
    <ligand>
        <name>ATP</name>
        <dbReference type="ChEBI" id="CHEBI:30616"/>
    </ligand>
</feature>
<gene>
    <name evidence="1" type="primary">groEL</name>
    <name evidence="1" type="synonym">groL</name>
    <name type="ordered locus">SSA_0226</name>
</gene>
<comment type="function">
    <text evidence="1">Together with its co-chaperonin GroES, plays an essential role in assisting protein folding. The GroEL-GroES system forms a nano-cage that allows encapsulation of the non-native substrate proteins and provides a physical environment optimized to promote and accelerate protein folding.</text>
</comment>
<comment type="catalytic activity">
    <reaction evidence="1">
        <text>ATP + H2O + a folded polypeptide = ADP + phosphate + an unfolded polypeptide.</text>
        <dbReference type="EC" id="5.6.1.7"/>
    </reaction>
</comment>
<comment type="subunit">
    <text evidence="1">Forms a cylinder of 14 subunits composed of two heptameric rings stacked back-to-back. Interacts with the co-chaperonin GroES.</text>
</comment>
<comment type="subcellular location">
    <subcellularLocation>
        <location evidence="1">Cytoplasm</location>
    </subcellularLocation>
</comment>
<comment type="similarity">
    <text evidence="1">Belongs to the chaperonin (HSP60) family.</text>
</comment>
<keyword id="KW-0067">ATP-binding</keyword>
<keyword id="KW-0143">Chaperone</keyword>
<keyword id="KW-0963">Cytoplasm</keyword>
<keyword id="KW-0413">Isomerase</keyword>
<keyword id="KW-0547">Nucleotide-binding</keyword>
<keyword id="KW-1185">Reference proteome</keyword>